<proteinExistence type="inferred from homology"/>
<accession>A2C0M6</accession>
<protein>
    <recommendedName>
        <fullName evidence="1">Probable malate:quinone oxidoreductase</fullName>
        <ecNumber evidence="1">1.1.5.4</ecNumber>
    </recommendedName>
    <alternativeName>
        <fullName evidence="1">MQO</fullName>
    </alternativeName>
    <alternativeName>
        <fullName evidence="1">Malate dehydrogenase [quinone]</fullName>
    </alternativeName>
</protein>
<organism>
    <name type="scientific">Prochlorococcus marinus (strain NATL1A)</name>
    <dbReference type="NCBI Taxonomy" id="167555"/>
    <lineage>
        <taxon>Bacteria</taxon>
        <taxon>Bacillati</taxon>
        <taxon>Cyanobacteriota</taxon>
        <taxon>Cyanophyceae</taxon>
        <taxon>Synechococcales</taxon>
        <taxon>Prochlorococcaceae</taxon>
        <taxon>Prochlorococcus</taxon>
    </lineage>
</organism>
<keyword id="KW-0274">FAD</keyword>
<keyword id="KW-0285">Flavoprotein</keyword>
<keyword id="KW-0560">Oxidoreductase</keyword>
<keyword id="KW-0816">Tricarboxylic acid cycle</keyword>
<feature type="chain" id="PRO_0000325509" description="Probable malate:quinone oxidoreductase">
    <location>
        <begin position="1"/>
        <end position="496"/>
    </location>
</feature>
<name>MQO_PROM1</name>
<evidence type="ECO:0000255" key="1">
    <source>
        <dbReference type="HAMAP-Rule" id="MF_00212"/>
    </source>
</evidence>
<evidence type="ECO:0000305" key="2"/>
<reference key="1">
    <citation type="journal article" date="2007" name="PLoS Genet.">
        <title>Patterns and implications of gene gain and loss in the evolution of Prochlorococcus.</title>
        <authorList>
            <person name="Kettler G.C."/>
            <person name="Martiny A.C."/>
            <person name="Huang K."/>
            <person name="Zucker J."/>
            <person name="Coleman M.L."/>
            <person name="Rodrigue S."/>
            <person name="Chen F."/>
            <person name="Lapidus A."/>
            <person name="Ferriera S."/>
            <person name="Johnson J."/>
            <person name="Steglich C."/>
            <person name="Church G.M."/>
            <person name="Richardson P."/>
            <person name="Chisholm S.W."/>
        </authorList>
    </citation>
    <scope>NUCLEOTIDE SEQUENCE [LARGE SCALE GENOMIC DNA]</scope>
    <source>
        <strain>NATL1A</strain>
    </source>
</reference>
<dbReference type="EC" id="1.1.5.4" evidence="1"/>
<dbReference type="EMBL" id="CP000553">
    <property type="protein sequence ID" value="ABM75036.1"/>
    <property type="status" value="ALT_INIT"/>
    <property type="molecule type" value="Genomic_DNA"/>
</dbReference>
<dbReference type="RefSeq" id="WP_041700671.1">
    <property type="nucleotide sequence ID" value="NC_008819.1"/>
</dbReference>
<dbReference type="SMR" id="A2C0M6"/>
<dbReference type="KEGG" id="pme:NATL1_04721"/>
<dbReference type="eggNOG" id="COG0579">
    <property type="taxonomic scope" value="Bacteria"/>
</dbReference>
<dbReference type="HOGENOM" id="CLU_028151_0_0_3"/>
<dbReference type="UniPathway" id="UPA00223">
    <property type="reaction ID" value="UER01008"/>
</dbReference>
<dbReference type="Proteomes" id="UP000002592">
    <property type="component" value="Chromosome"/>
</dbReference>
<dbReference type="GO" id="GO:0047545">
    <property type="term" value="F:2-hydroxyglutarate dehydrogenase activity"/>
    <property type="evidence" value="ECO:0007669"/>
    <property type="project" value="TreeGrafter"/>
</dbReference>
<dbReference type="GO" id="GO:0008924">
    <property type="term" value="F:L-malate dehydrogenase (quinone) activity"/>
    <property type="evidence" value="ECO:0007669"/>
    <property type="project" value="UniProtKB-UniRule"/>
</dbReference>
<dbReference type="GO" id="GO:0006099">
    <property type="term" value="P:tricarboxylic acid cycle"/>
    <property type="evidence" value="ECO:0007669"/>
    <property type="project" value="UniProtKB-UniRule"/>
</dbReference>
<dbReference type="Gene3D" id="3.50.50.60">
    <property type="entry name" value="FAD/NAD(P)-binding domain"/>
    <property type="match status" value="1"/>
</dbReference>
<dbReference type="HAMAP" id="MF_00212">
    <property type="entry name" value="MQO"/>
    <property type="match status" value="1"/>
</dbReference>
<dbReference type="InterPro" id="IPR036188">
    <property type="entry name" value="FAD/NAD-bd_sf"/>
</dbReference>
<dbReference type="InterPro" id="IPR006231">
    <property type="entry name" value="MQO"/>
</dbReference>
<dbReference type="NCBIfam" id="TIGR01320">
    <property type="entry name" value="mal_quin_oxido"/>
    <property type="match status" value="1"/>
</dbReference>
<dbReference type="NCBIfam" id="NF003606">
    <property type="entry name" value="PRK05257.2-1"/>
    <property type="match status" value="1"/>
</dbReference>
<dbReference type="NCBIfam" id="NF003607">
    <property type="entry name" value="PRK05257.2-3"/>
    <property type="match status" value="1"/>
</dbReference>
<dbReference type="NCBIfam" id="NF003611">
    <property type="entry name" value="PRK05257.3-2"/>
    <property type="match status" value="1"/>
</dbReference>
<dbReference type="NCBIfam" id="NF009875">
    <property type="entry name" value="PRK13339.1"/>
    <property type="match status" value="1"/>
</dbReference>
<dbReference type="PANTHER" id="PTHR43104">
    <property type="entry name" value="L-2-HYDROXYGLUTARATE DEHYDROGENASE, MITOCHONDRIAL"/>
    <property type="match status" value="1"/>
</dbReference>
<dbReference type="PANTHER" id="PTHR43104:SF2">
    <property type="entry name" value="L-2-HYDROXYGLUTARATE DEHYDROGENASE, MITOCHONDRIAL"/>
    <property type="match status" value="1"/>
</dbReference>
<dbReference type="Pfam" id="PF06039">
    <property type="entry name" value="Mqo"/>
    <property type="match status" value="1"/>
</dbReference>
<dbReference type="SUPFAM" id="SSF51905">
    <property type="entry name" value="FAD/NAD(P)-binding domain"/>
    <property type="match status" value="1"/>
</dbReference>
<sequence length="496" mass="54802">MFNTPTPDSENTYDAILVGAGIMSSTLAVLLHELEPDLRLLVVEKLSSAGLESSCAKNNAGTGHAANCELNYTPIQEDGHLSTNKAFEINKSFEQSLEFWASLAEKGKLIPKTFLNKLPHISLVFGDEDISLLKKRFSKLSSHAAFAEMEFTMDHGELKDWVPLIMDGRQHSEKIAATRIKRGTDIDFGNLTRSYINQIEGAKSIDINYSTNVENLQQDSEGDWYLSLEGAKNNRIVRSKFVFLGAGGGALSLLQKSRIPEGLLYAGFPVSGKWLICDEEKSTKTHNAKVYGKAAVGAPPMSVPHLDTRWIDKKKSLLFGPFAGFSSNFLKYGSKLDLFRSIKTTNLFSMLQAGLDNIDLGKYLLNQLIQTNEDRIDTLKRFLPQVSPNDWKLSTAGQRVQIIKQTSKGGVLKMGTEVVTSSDGSLAALLGASPGASTAVTIMIEVLNRCWLEKMKSSKWKNKMLELFPSIGTDINSDQEALLAIRKRNDFLLKLI</sequence>
<comment type="catalytic activity">
    <reaction evidence="1">
        <text>(S)-malate + a quinone = a quinol + oxaloacetate</text>
        <dbReference type="Rhea" id="RHEA:46012"/>
        <dbReference type="ChEBI" id="CHEBI:15589"/>
        <dbReference type="ChEBI" id="CHEBI:16452"/>
        <dbReference type="ChEBI" id="CHEBI:24646"/>
        <dbReference type="ChEBI" id="CHEBI:132124"/>
        <dbReference type="EC" id="1.1.5.4"/>
    </reaction>
</comment>
<comment type="cofactor">
    <cofactor evidence="1">
        <name>FAD</name>
        <dbReference type="ChEBI" id="CHEBI:57692"/>
    </cofactor>
</comment>
<comment type="pathway">
    <text evidence="1">Carbohydrate metabolism; tricarboxylic acid cycle; oxaloacetate from (S)-malate (quinone route): step 1/1.</text>
</comment>
<comment type="similarity">
    <text evidence="1">Belongs to the MQO family.</text>
</comment>
<comment type="sequence caution" evidence="2">
    <conflict type="erroneous initiation">
        <sequence resource="EMBL-CDS" id="ABM75036"/>
    </conflict>
</comment>
<gene>
    <name evidence="1" type="primary">mqo</name>
    <name type="ordered locus">NATL1_04721</name>
</gene>